<sequence>MGQMVEFEKNGVKVRGYIATPKWGGPGVIVIHEWWGLESPLSNIKEICDRFAQEGFVAFAPDFYEGKYADNPDDAGKLMTDMFENRMDKVDAIFKASVDFLKECRYTSPKKVGVTGFCCGGTLSMYFAGKFPDLIDASVPFYGLPQITKIDAENIKVPIFFILAEKDEFVNNDEVIDIAKKVWKNGVDVKVKVYSGVTHAFLNEKREDVYDPCRAQDAWNLTVAFFKEYLT</sequence>
<organism>
    <name type="scientific">Aquifex pyrophilus</name>
    <dbReference type="NCBI Taxonomy" id="2714"/>
    <lineage>
        <taxon>Bacteria</taxon>
        <taxon>Pseudomonadati</taxon>
        <taxon>Aquificota</taxon>
        <taxon>Aquificia</taxon>
        <taxon>Aquificales</taxon>
        <taxon>Aquificaceae</taxon>
        <taxon>Aquifex</taxon>
    </lineage>
</organism>
<protein>
    <recommendedName>
        <fullName>Protein usf</fullName>
    </recommendedName>
</protein>
<feature type="chain" id="PRO_0000065725" description="Protein usf">
    <location>
        <begin position="1"/>
        <end position="231"/>
    </location>
</feature>
<dbReference type="EMBL" id="U17575">
    <property type="protein sequence ID" value="AAA88922.1"/>
    <property type="molecule type" value="Genomic_DNA"/>
</dbReference>
<dbReference type="SMR" id="P46209"/>
<dbReference type="ESTHER" id="aqupy-usf">
    <property type="family name" value="Dienelactone_hydrolase"/>
</dbReference>
<dbReference type="GO" id="GO:0016787">
    <property type="term" value="F:hydrolase activity"/>
    <property type="evidence" value="ECO:0007669"/>
    <property type="project" value="InterPro"/>
</dbReference>
<dbReference type="Gene3D" id="3.40.50.1820">
    <property type="entry name" value="alpha/beta hydrolase"/>
    <property type="match status" value="1"/>
</dbReference>
<dbReference type="InterPro" id="IPR029058">
    <property type="entry name" value="AB_hydrolase_fold"/>
</dbReference>
<dbReference type="InterPro" id="IPR002925">
    <property type="entry name" value="Dienelactn_hydro"/>
</dbReference>
<dbReference type="InterPro" id="IPR051049">
    <property type="entry name" value="Dienelactone_hydrolase-like"/>
</dbReference>
<dbReference type="PANTHER" id="PTHR46623:SF6">
    <property type="entry name" value="ALPHA_BETA-HYDROLASES SUPERFAMILY PROTEIN"/>
    <property type="match status" value="1"/>
</dbReference>
<dbReference type="PANTHER" id="PTHR46623">
    <property type="entry name" value="CARBOXYMETHYLENEBUTENOLIDASE-RELATED"/>
    <property type="match status" value="1"/>
</dbReference>
<dbReference type="Pfam" id="PF01738">
    <property type="entry name" value="DLH"/>
    <property type="match status" value="1"/>
</dbReference>
<dbReference type="SUPFAM" id="SSF53474">
    <property type="entry name" value="alpha/beta-Hydrolases"/>
    <property type="match status" value="1"/>
</dbReference>
<reference key="1">
    <citation type="journal article" date="1995" name="J. Bacteriol.">
        <title>Flagellar structure and hyperthermophily: analysis of a single flagellin gene and its product in Aquifex pyrophilus.</title>
        <authorList>
            <person name="Behammer W."/>
            <person name="Shao Z."/>
            <person name="Mages W."/>
            <person name="Rachel R."/>
            <person name="Stetter K.O."/>
            <person name="Schmitt R."/>
        </authorList>
    </citation>
    <scope>NUCLEOTIDE SEQUENCE [GENOMIC DNA]</scope>
    <source>
        <strain>DSM 6858 / JCM 9492 / Kol5A</strain>
    </source>
</reference>
<proteinExistence type="predicted"/>
<name>USF_AQUPY</name>
<gene>
    <name type="primary">usf</name>
</gene>
<accession>P46209</accession>